<sequence>MSKMKTCKSAKKRYAFTSKGKIKYKKQNLRHILTKKSSKRRRKLGKSGLVSSFEVKRIKTLLPYA</sequence>
<accession>A1QYY4</accession>
<evidence type="ECO:0000255" key="1">
    <source>
        <dbReference type="HAMAP-Rule" id="MF_00514"/>
    </source>
</evidence>
<evidence type="ECO:0000305" key="2"/>
<dbReference type="EMBL" id="CP000049">
    <property type="protein sequence ID" value="AAX17526.1"/>
    <property type="molecule type" value="Genomic_DNA"/>
</dbReference>
<dbReference type="RefSeq" id="WP_011772145.1">
    <property type="nucleotide sequence ID" value="NZ_CP073176.1"/>
</dbReference>
<dbReference type="SMR" id="A1QYY4"/>
<dbReference type="KEGG" id="btu:BT0189"/>
<dbReference type="eggNOG" id="COG0291">
    <property type="taxonomic scope" value="Bacteria"/>
</dbReference>
<dbReference type="HOGENOM" id="CLU_169643_1_1_12"/>
<dbReference type="Proteomes" id="UP000001205">
    <property type="component" value="Chromosome"/>
</dbReference>
<dbReference type="GO" id="GO:0022625">
    <property type="term" value="C:cytosolic large ribosomal subunit"/>
    <property type="evidence" value="ECO:0007669"/>
    <property type="project" value="TreeGrafter"/>
</dbReference>
<dbReference type="GO" id="GO:0003735">
    <property type="term" value="F:structural constituent of ribosome"/>
    <property type="evidence" value="ECO:0007669"/>
    <property type="project" value="InterPro"/>
</dbReference>
<dbReference type="GO" id="GO:0006412">
    <property type="term" value="P:translation"/>
    <property type="evidence" value="ECO:0007669"/>
    <property type="project" value="UniProtKB-UniRule"/>
</dbReference>
<dbReference type="FunFam" id="4.10.410.60:FF:000001">
    <property type="entry name" value="50S ribosomal protein L35"/>
    <property type="match status" value="1"/>
</dbReference>
<dbReference type="Gene3D" id="4.10.410.60">
    <property type="match status" value="1"/>
</dbReference>
<dbReference type="HAMAP" id="MF_00514">
    <property type="entry name" value="Ribosomal_bL35"/>
    <property type="match status" value="1"/>
</dbReference>
<dbReference type="InterPro" id="IPR001706">
    <property type="entry name" value="Ribosomal_bL35"/>
</dbReference>
<dbReference type="InterPro" id="IPR021137">
    <property type="entry name" value="Ribosomal_bL35-like"/>
</dbReference>
<dbReference type="InterPro" id="IPR018265">
    <property type="entry name" value="Ribosomal_bL35_CS"/>
</dbReference>
<dbReference type="InterPro" id="IPR037229">
    <property type="entry name" value="Ribosomal_bL35_sf"/>
</dbReference>
<dbReference type="NCBIfam" id="TIGR00001">
    <property type="entry name" value="rpmI_bact"/>
    <property type="match status" value="1"/>
</dbReference>
<dbReference type="PANTHER" id="PTHR33343">
    <property type="entry name" value="54S RIBOSOMAL PROTEIN BL35M"/>
    <property type="match status" value="1"/>
</dbReference>
<dbReference type="PANTHER" id="PTHR33343:SF1">
    <property type="entry name" value="LARGE RIBOSOMAL SUBUNIT PROTEIN BL35M"/>
    <property type="match status" value="1"/>
</dbReference>
<dbReference type="Pfam" id="PF01632">
    <property type="entry name" value="Ribosomal_L35p"/>
    <property type="match status" value="1"/>
</dbReference>
<dbReference type="PRINTS" id="PR00064">
    <property type="entry name" value="RIBOSOMALL35"/>
</dbReference>
<dbReference type="SUPFAM" id="SSF143034">
    <property type="entry name" value="L35p-like"/>
    <property type="match status" value="1"/>
</dbReference>
<dbReference type="PROSITE" id="PS00936">
    <property type="entry name" value="RIBOSOMAL_L35"/>
    <property type="match status" value="1"/>
</dbReference>
<name>RL35_BORT9</name>
<gene>
    <name evidence="1" type="primary">rpmI</name>
    <name type="ordered locus">BT0189</name>
</gene>
<comment type="similarity">
    <text evidence="1">Belongs to the bacterial ribosomal protein bL35 family.</text>
</comment>
<proteinExistence type="inferred from homology"/>
<organism>
    <name type="scientific">Borrelia turicatae (strain 91E135)</name>
    <dbReference type="NCBI Taxonomy" id="314724"/>
    <lineage>
        <taxon>Bacteria</taxon>
        <taxon>Pseudomonadati</taxon>
        <taxon>Spirochaetota</taxon>
        <taxon>Spirochaetia</taxon>
        <taxon>Spirochaetales</taxon>
        <taxon>Borreliaceae</taxon>
        <taxon>Borrelia</taxon>
    </lineage>
</organism>
<feature type="chain" id="PRO_1000146124" description="Large ribosomal subunit protein bL35">
    <location>
        <begin position="1"/>
        <end position="65"/>
    </location>
</feature>
<reference key="1">
    <citation type="submission" date="2004-12" db="EMBL/GenBank/DDBJ databases">
        <title>The genome sequence of Borrelia hermsii and Borrelia turicatae: comparative analysis of two agents of endemic N. America relapsing fever.</title>
        <authorList>
            <person name="Porcella S.F."/>
            <person name="Raffel S.J."/>
            <person name="Schrumpf M.E."/>
            <person name="Montgomery B."/>
            <person name="Smith T."/>
            <person name="Schwan T.G."/>
        </authorList>
    </citation>
    <scope>NUCLEOTIDE SEQUENCE [LARGE SCALE GENOMIC DNA]</scope>
    <source>
        <strain>91E135</strain>
    </source>
</reference>
<protein>
    <recommendedName>
        <fullName evidence="1">Large ribosomal subunit protein bL35</fullName>
    </recommendedName>
    <alternativeName>
        <fullName evidence="2">50S ribosomal protein L35</fullName>
    </alternativeName>
</protein>
<keyword id="KW-1185">Reference proteome</keyword>
<keyword id="KW-0687">Ribonucleoprotein</keyword>
<keyword id="KW-0689">Ribosomal protein</keyword>